<gene>
    <name evidence="1" type="primary">plsX</name>
    <name type="ordered locus">OEOE_0450</name>
</gene>
<comment type="function">
    <text evidence="1">Catalyzes the reversible formation of acyl-phosphate (acyl-PO(4)) from acyl-[acyl-carrier-protein] (acyl-ACP). This enzyme utilizes acyl-ACP as fatty acyl donor, but not acyl-CoA.</text>
</comment>
<comment type="catalytic activity">
    <reaction evidence="1">
        <text>a fatty acyl-[ACP] + phosphate = an acyl phosphate + holo-[ACP]</text>
        <dbReference type="Rhea" id="RHEA:42292"/>
        <dbReference type="Rhea" id="RHEA-COMP:9685"/>
        <dbReference type="Rhea" id="RHEA-COMP:14125"/>
        <dbReference type="ChEBI" id="CHEBI:43474"/>
        <dbReference type="ChEBI" id="CHEBI:59918"/>
        <dbReference type="ChEBI" id="CHEBI:64479"/>
        <dbReference type="ChEBI" id="CHEBI:138651"/>
        <dbReference type="EC" id="2.3.1.274"/>
    </reaction>
</comment>
<comment type="pathway">
    <text evidence="1">Lipid metabolism; phospholipid metabolism.</text>
</comment>
<comment type="subunit">
    <text evidence="1">Homodimer. Probably interacts with PlsY.</text>
</comment>
<comment type="subcellular location">
    <subcellularLocation>
        <location evidence="1">Cytoplasm</location>
    </subcellularLocation>
    <text evidence="1">Associated with the membrane possibly through PlsY.</text>
</comment>
<comment type="similarity">
    <text evidence="1">Belongs to the PlsX family.</text>
</comment>
<name>PLSX_OENOB</name>
<accession>Q04GL5</accession>
<proteinExistence type="inferred from homology"/>
<dbReference type="EC" id="2.3.1.274" evidence="1"/>
<dbReference type="EMBL" id="CP000411">
    <property type="protein sequence ID" value="ABJ56407.1"/>
    <property type="molecule type" value="Genomic_DNA"/>
</dbReference>
<dbReference type="RefSeq" id="WP_002818247.1">
    <property type="nucleotide sequence ID" value="NC_008528.1"/>
</dbReference>
<dbReference type="SMR" id="Q04GL5"/>
<dbReference type="STRING" id="203123.OEOE_0450"/>
<dbReference type="GeneID" id="75065243"/>
<dbReference type="KEGG" id="ooe:OEOE_0450"/>
<dbReference type="eggNOG" id="COG0416">
    <property type="taxonomic scope" value="Bacteria"/>
</dbReference>
<dbReference type="HOGENOM" id="CLU_039379_1_1_9"/>
<dbReference type="UniPathway" id="UPA00085"/>
<dbReference type="Proteomes" id="UP000000774">
    <property type="component" value="Chromosome"/>
</dbReference>
<dbReference type="GO" id="GO:0005737">
    <property type="term" value="C:cytoplasm"/>
    <property type="evidence" value="ECO:0007669"/>
    <property type="project" value="UniProtKB-SubCell"/>
</dbReference>
<dbReference type="GO" id="GO:0043811">
    <property type="term" value="F:phosphate:acyl-[acyl carrier protein] acyltransferase activity"/>
    <property type="evidence" value="ECO:0007669"/>
    <property type="project" value="UniProtKB-UniRule"/>
</dbReference>
<dbReference type="GO" id="GO:0006633">
    <property type="term" value="P:fatty acid biosynthetic process"/>
    <property type="evidence" value="ECO:0007669"/>
    <property type="project" value="UniProtKB-UniRule"/>
</dbReference>
<dbReference type="GO" id="GO:0008654">
    <property type="term" value="P:phospholipid biosynthetic process"/>
    <property type="evidence" value="ECO:0007669"/>
    <property type="project" value="UniProtKB-KW"/>
</dbReference>
<dbReference type="Gene3D" id="3.40.718.10">
    <property type="entry name" value="Isopropylmalate Dehydrogenase"/>
    <property type="match status" value="1"/>
</dbReference>
<dbReference type="HAMAP" id="MF_00019">
    <property type="entry name" value="PlsX"/>
    <property type="match status" value="1"/>
</dbReference>
<dbReference type="InterPro" id="IPR003664">
    <property type="entry name" value="FA_synthesis"/>
</dbReference>
<dbReference type="InterPro" id="IPR012281">
    <property type="entry name" value="Phospholipid_synth_PlsX-like"/>
</dbReference>
<dbReference type="NCBIfam" id="TIGR00182">
    <property type="entry name" value="plsX"/>
    <property type="match status" value="1"/>
</dbReference>
<dbReference type="PANTHER" id="PTHR30100">
    <property type="entry name" value="FATTY ACID/PHOSPHOLIPID SYNTHESIS PROTEIN PLSX"/>
    <property type="match status" value="1"/>
</dbReference>
<dbReference type="PANTHER" id="PTHR30100:SF1">
    <property type="entry name" value="PHOSPHATE ACYLTRANSFERASE"/>
    <property type="match status" value="1"/>
</dbReference>
<dbReference type="Pfam" id="PF02504">
    <property type="entry name" value="FA_synthesis"/>
    <property type="match status" value="1"/>
</dbReference>
<dbReference type="PIRSF" id="PIRSF002465">
    <property type="entry name" value="Phsphlp_syn_PlsX"/>
    <property type="match status" value="1"/>
</dbReference>
<dbReference type="SUPFAM" id="SSF53659">
    <property type="entry name" value="Isocitrate/Isopropylmalate dehydrogenase-like"/>
    <property type="match status" value="1"/>
</dbReference>
<reference key="1">
    <citation type="journal article" date="2006" name="Proc. Natl. Acad. Sci. U.S.A.">
        <title>Comparative genomics of the lactic acid bacteria.</title>
        <authorList>
            <person name="Makarova K.S."/>
            <person name="Slesarev A."/>
            <person name="Wolf Y.I."/>
            <person name="Sorokin A."/>
            <person name="Mirkin B."/>
            <person name="Koonin E.V."/>
            <person name="Pavlov A."/>
            <person name="Pavlova N."/>
            <person name="Karamychev V."/>
            <person name="Polouchine N."/>
            <person name="Shakhova V."/>
            <person name="Grigoriev I."/>
            <person name="Lou Y."/>
            <person name="Rohksar D."/>
            <person name="Lucas S."/>
            <person name="Huang K."/>
            <person name="Goodstein D.M."/>
            <person name="Hawkins T."/>
            <person name="Plengvidhya V."/>
            <person name="Welker D."/>
            <person name="Hughes J."/>
            <person name="Goh Y."/>
            <person name="Benson A."/>
            <person name="Baldwin K."/>
            <person name="Lee J.-H."/>
            <person name="Diaz-Muniz I."/>
            <person name="Dosti B."/>
            <person name="Smeianov V."/>
            <person name="Wechter W."/>
            <person name="Barabote R."/>
            <person name="Lorca G."/>
            <person name="Altermann E."/>
            <person name="Barrangou R."/>
            <person name="Ganesan B."/>
            <person name="Xie Y."/>
            <person name="Rawsthorne H."/>
            <person name="Tamir D."/>
            <person name="Parker C."/>
            <person name="Breidt F."/>
            <person name="Broadbent J.R."/>
            <person name="Hutkins R."/>
            <person name="O'Sullivan D."/>
            <person name="Steele J."/>
            <person name="Unlu G."/>
            <person name="Saier M.H. Jr."/>
            <person name="Klaenhammer T."/>
            <person name="Richardson P."/>
            <person name="Kozyavkin S."/>
            <person name="Weimer B.C."/>
            <person name="Mills D.A."/>
        </authorList>
    </citation>
    <scope>NUCLEOTIDE SEQUENCE [LARGE SCALE GENOMIC DNA]</scope>
    <source>
        <strain>ATCC BAA-331 / PSU-1</strain>
    </source>
</reference>
<feature type="chain" id="PRO_0000329245" description="Phosphate acyltransferase">
    <location>
        <begin position="1"/>
        <end position="348"/>
    </location>
</feature>
<evidence type="ECO:0000255" key="1">
    <source>
        <dbReference type="HAMAP-Rule" id="MF_00019"/>
    </source>
</evidence>
<organism>
    <name type="scientific">Oenococcus oeni (strain ATCC BAA-331 / PSU-1)</name>
    <dbReference type="NCBI Taxonomy" id="203123"/>
    <lineage>
        <taxon>Bacteria</taxon>
        <taxon>Bacillati</taxon>
        <taxon>Bacillota</taxon>
        <taxon>Bacilli</taxon>
        <taxon>Lactobacillales</taxon>
        <taxon>Lactobacillaceae</taxon>
        <taxon>Oenococcus</taxon>
    </lineage>
</organism>
<protein>
    <recommendedName>
        <fullName evidence="1">Phosphate acyltransferase</fullName>
        <ecNumber evidence="1">2.3.1.274</ecNumber>
    </recommendedName>
    <alternativeName>
        <fullName evidence="1">Acyl-ACP phosphotransacylase</fullName>
    </alternativeName>
    <alternativeName>
        <fullName evidence="1">Acyl-[acyl-carrier-protein]--phosphate acyltransferase</fullName>
    </alternativeName>
    <alternativeName>
        <fullName evidence="1">Phosphate-acyl-ACP acyltransferase</fullName>
    </alternativeName>
</protein>
<sequence length="348" mass="37451">MDKTYTIAIDAMGGDNAPEEIVKGALLARDKYKNLHLNLYGDKGKILELIGETKQDRIKIINTTEMIEMGEEPVKAVRKKKDSSMVVATNAVKGGSADALFSAGNTGALLASGIFIVGRISGIERPGLLTVLPSVDDPKRQWVFMDVGANAEVKPSYLYQFAVLGNFYATHVLKKPNPEVKLLNNGTEEDKGDKIHIQAYQLLKNGKQLNFTGNIESRELLNGHADVVVADGFSGNAALKAIEGTALTMFAGLRKILVNGSLKTKIGAALVKPALKEFSSVLDYNNAGGAVIAGVKAPVVKTHGSAKAKTVSNTIGQIKIMLESNLVPDITKYVDENKDQFKIILEEK</sequence>
<keyword id="KW-0963">Cytoplasm</keyword>
<keyword id="KW-0444">Lipid biosynthesis</keyword>
<keyword id="KW-0443">Lipid metabolism</keyword>
<keyword id="KW-0594">Phospholipid biosynthesis</keyword>
<keyword id="KW-1208">Phospholipid metabolism</keyword>
<keyword id="KW-1185">Reference proteome</keyword>
<keyword id="KW-0808">Transferase</keyword>